<proteinExistence type="inferred from homology"/>
<dbReference type="EMBL" id="CP001635">
    <property type="protein sequence ID" value="ACS18429.1"/>
    <property type="molecule type" value="Genomic_DNA"/>
</dbReference>
<dbReference type="SMR" id="C5CUK1"/>
<dbReference type="STRING" id="543728.Vapar_1779"/>
<dbReference type="KEGG" id="vap:Vapar_1779"/>
<dbReference type="eggNOG" id="COG0231">
    <property type="taxonomic scope" value="Bacteria"/>
</dbReference>
<dbReference type="HOGENOM" id="CLU_074944_2_1_4"/>
<dbReference type="OrthoDB" id="9801844at2"/>
<dbReference type="UniPathway" id="UPA00345"/>
<dbReference type="GO" id="GO:0005737">
    <property type="term" value="C:cytoplasm"/>
    <property type="evidence" value="ECO:0007669"/>
    <property type="project" value="UniProtKB-SubCell"/>
</dbReference>
<dbReference type="GO" id="GO:0003746">
    <property type="term" value="F:translation elongation factor activity"/>
    <property type="evidence" value="ECO:0007669"/>
    <property type="project" value="UniProtKB-UniRule"/>
</dbReference>
<dbReference type="GO" id="GO:0043043">
    <property type="term" value="P:peptide biosynthetic process"/>
    <property type="evidence" value="ECO:0007669"/>
    <property type="project" value="InterPro"/>
</dbReference>
<dbReference type="CDD" id="cd04470">
    <property type="entry name" value="S1_EF-P_repeat_1"/>
    <property type="match status" value="1"/>
</dbReference>
<dbReference type="CDD" id="cd05794">
    <property type="entry name" value="S1_EF-P_repeat_2"/>
    <property type="match status" value="1"/>
</dbReference>
<dbReference type="FunFam" id="2.30.30.30:FF:000003">
    <property type="entry name" value="Elongation factor P"/>
    <property type="match status" value="1"/>
</dbReference>
<dbReference type="FunFam" id="2.40.50.140:FF:000004">
    <property type="entry name" value="Elongation factor P"/>
    <property type="match status" value="1"/>
</dbReference>
<dbReference type="FunFam" id="2.40.50.140:FF:000009">
    <property type="entry name" value="Elongation factor P"/>
    <property type="match status" value="1"/>
</dbReference>
<dbReference type="Gene3D" id="2.30.30.30">
    <property type="match status" value="1"/>
</dbReference>
<dbReference type="Gene3D" id="2.40.50.140">
    <property type="entry name" value="Nucleic acid-binding proteins"/>
    <property type="match status" value="2"/>
</dbReference>
<dbReference type="HAMAP" id="MF_00141">
    <property type="entry name" value="EF_P"/>
    <property type="match status" value="1"/>
</dbReference>
<dbReference type="InterPro" id="IPR015365">
    <property type="entry name" value="Elong-fact-P_C"/>
</dbReference>
<dbReference type="InterPro" id="IPR012340">
    <property type="entry name" value="NA-bd_OB-fold"/>
</dbReference>
<dbReference type="InterPro" id="IPR014722">
    <property type="entry name" value="Rib_uL2_dom2"/>
</dbReference>
<dbReference type="InterPro" id="IPR020599">
    <property type="entry name" value="Transl_elong_fac_P/YeiP"/>
</dbReference>
<dbReference type="InterPro" id="IPR013185">
    <property type="entry name" value="Transl_elong_KOW-like"/>
</dbReference>
<dbReference type="InterPro" id="IPR001059">
    <property type="entry name" value="Transl_elong_P/YeiP_cen"/>
</dbReference>
<dbReference type="InterPro" id="IPR013852">
    <property type="entry name" value="Transl_elong_P/YeiP_CS"/>
</dbReference>
<dbReference type="InterPro" id="IPR011768">
    <property type="entry name" value="Transl_elongation_fac_P"/>
</dbReference>
<dbReference type="InterPro" id="IPR008991">
    <property type="entry name" value="Translation_prot_SH3-like_sf"/>
</dbReference>
<dbReference type="NCBIfam" id="TIGR00038">
    <property type="entry name" value="efp"/>
    <property type="match status" value="1"/>
</dbReference>
<dbReference type="NCBIfam" id="NF001810">
    <property type="entry name" value="PRK00529.1"/>
    <property type="match status" value="1"/>
</dbReference>
<dbReference type="PANTHER" id="PTHR30053">
    <property type="entry name" value="ELONGATION FACTOR P"/>
    <property type="match status" value="1"/>
</dbReference>
<dbReference type="PANTHER" id="PTHR30053:SF12">
    <property type="entry name" value="ELONGATION FACTOR P (EF-P) FAMILY PROTEIN"/>
    <property type="match status" value="1"/>
</dbReference>
<dbReference type="Pfam" id="PF01132">
    <property type="entry name" value="EFP"/>
    <property type="match status" value="1"/>
</dbReference>
<dbReference type="Pfam" id="PF08207">
    <property type="entry name" value="EFP_N"/>
    <property type="match status" value="1"/>
</dbReference>
<dbReference type="Pfam" id="PF09285">
    <property type="entry name" value="Elong-fact-P_C"/>
    <property type="match status" value="1"/>
</dbReference>
<dbReference type="PIRSF" id="PIRSF005901">
    <property type="entry name" value="EF-P"/>
    <property type="match status" value="1"/>
</dbReference>
<dbReference type="SMART" id="SM01185">
    <property type="entry name" value="EFP"/>
    <property type="match status" value="1"/>
</dbReference>
<dbReference type="SMART" id="SM00841">
    <property type="entry name" value="Elong-fact-P_C"/>
    <property type="match status" value="1"/>
</dbReference>
<dbReference type="SUPFAM" id="SSF50249">
    <property type="entry name" value="Nucleic acid-binding proteins"/>
    <property type="match status" value="2"/>
</dbReference>
<dbReference type="SUPFAM" id="SSF50104">
    <property type="entry name" value="Translation proteins SH3-like domain"/>
    <property type="match status" value="1"/>
</dbReference>
<dbReference type="PROSITE" id="PS01275">
    <property type="entry name" value="EFP"/>
    <property type="match status" value="1"/>
</dbReference>
<accession>C5CUK1</accession>
<reference key="1">
    <citation type="journal article" date="2011" name="J. Bacteriol.">
        <title>Complete genome sequence of the metabolically versatile plant growth-promoting endophyte, Variovorax paradoxus S110.</title>
        <authorList>
            <person name="Han J.I."/>
            <person name="Choi H.K."/>
            <person name="Lee S.W."/>
            <person name="Orwin P.M."/>
            <person name="Kim J."/>
            <person name="Laroe S.L."/>
            <person name="Kim T.G."/>
            <person name="O'Neil J."/>
            <person name="Leadbetter J.R."/>
            <person name="Lee S.Y."/>
            <person name="Hur C.G."/>
            <person name="Spain J.C."/>
            <person name="Ovchinnikova G."/>
            <person name="Goodwin L."/>
            <person name="Han C."/>
        </authorList>
    </citation>
    <scope>NUCLEOTIDE SEQUENCE [LARGE SCALE GENOMIC DNA]</scope>
    <source>
        <strain>S110</strain>
    </source>
</reference>
<protein>
    <recommendedName>
        <fullName evidence="1">Elongation factor P</fullName>
        <shortName evidence="1">EF-P</shortName>
    </recommendedName>
</protein>
<evidence type="ECO:0000255" key="1">
    <source>
        <dbReference type="HAMAP-Rule" id="MF_00141"/>
    </source>
</evidence>
<comment type="function">
    <text evidence="1">Involved in peptide bond synthesis. Stimulates efficient translation and peptide-bond synthesis on native or reconstituted 70S ribosomes in vitro. Probably functions indirectly by altering the affinity of the ribosome for aminoacyl-tRNA, thus increasing their reactivity as acceptors for peptidyl transferase.</text>
</comment>
<comment type="pathway">
    <text evidence="1">Protein biosynthesis; polypeptide chain elongation.</text>
</comment>
<comment type="subcellular location">
    <subcellularLocation>
        <location evidence="1">Cytoplasm</location>
    </subcellularLocation>
</comment>
<comment type="similarity">
    <text evidence="1">Belongs to the elongation factor P family.</text>
</comment>
<sequence length="184" mass="20722">MKIAQEIRAGNVIMHGKDPMVVLKTEYSRGGRNSATVRMKLKSLIANFNTEVVFKADDKIDQIVLDKKECTYSYFADPMYVCMDTEYNQYEVEAENMGDALNYLEDGMPVEVVFYDGKAISVELPTSVEREITWTEPAVKGDTSGKVLKPAKIATGFEVPVPLFVSQGDKIEIDTRTGEYRKRV</sequence>
<keyword id="KW-0963">Cytoplasm</keyword>
<keyword id="KW-0251">Elongation factor</keyword>
<keyword id="KW-0648">Protein biosynthesis</keyword>
<feature type="chain" id="PRO_1000203283" description="Elongation factor P">
    <location>
        <begin position="1"/>
        <end position="184"/>
    </location>
</feature>
<name>EFP_VARPS</name>
<gene>
    <name evidence="1" type="primary">efp</name>
    <name type="ordered locus">Vapar_1779</name>
</gene>
<organism>
    <name type="scientific">Variovorax paradoxus (strain S110)</name>
    <dbReference type="NCBI Taxonomy" id="543728"/>
    <lineage>
        <taxon>Bacteria</taxon>
        <taxon>Pseudomonadati</taxon>
        <taxon>Pseudomonadota</taxon>
        <taxon>Betaproteobacteria</taxon>
        <taxon>Burkholderiales</taxon>
        <taxon>Comamonadaceae</taxon>
        <taxon>Variovorax</taxon>
    </lineage>
</organism>